<gene>
    <name evidence="1" type="primary">ackA</name>
    <name type="ordered locus">PCC8801_3887</name>
</gene>
<name>ACKA_RIPO1</name>
<keyword id="KW-0067">ATP-binding</keyword>
<keyword id="KW-0963">Cytoplasm</keyword>
<keyword id="KW-0418">Kinase</keyword>
<keyword id="KW-0460">Magnesium</keyword>
<keyword id="KW-0479">Metal-binding</keyword>
<keyword id="KW-0547">Nucleotide-binding</keyword>
<keyword id="KW-1185">Reference proteome</keyword>
<keyword id="KW-0808">Transferase</keyword>
<sequence length="404" mass="44278">MKILILNAGSSSQKSCLYDFKEKNFLDNPVEPIWKADIDWTLATGQGILTVKANGIKQKITLNSDDHHHGIAKMLGTLVEGKTKVIQHLSDISIVGHRVVHGGTDYSEATLITPDVKATIARLIPLAPTHNPSHLEGIEAIEQVLGNIPQVAVFDTAFHSQMPLEASVYPIPYEWLDKGIRRYGFHGTSHKYCAEKASQLLNKPLTHLKLITCHLGNGCSLAAIKNGISIDTTMGFTPLEGLMMGTRSGSIDPAILIYLMREYDFTFEQLNEMLNQESGLKGVSGISADLRAIFEAINQGNDRAQLALDMYLHRLRSQIGSMLASLGGLDALIFTAGIGENAAIVREKACQGFSFLGLKLDLEKNANSPVNIDISTPDSTVRILVIHTQEDWAIAQECCHWLNK</sequence>
<evidence type="ECO:0000255" key="1">
    <source>
        <dbReference type="HAMAP-Rule" id="MF_00020"/>
    </source>
</evidence>
<proteinExistence type="inferred from homology"/>
<protein>
    <recommendedName>
        <fullName evidence="1">Acetate kinase</fullName>
        <ecNumber evidence="1">2.7.2.1</ecNumber>
    </recommendedName>
    <alternativeName>
        <fullName evidence="1">Acetokinase</fullName>
    </alternativeName>
</protein>
<comment type="function">
    <text evidence="1">Catalyzes the formation of acetyl phosphate from acetate and ATP. Can also catalyze the reverse reaction.</text>
</comment>
<comment type="catalytic activity">
    <reaction evidence="1">
        <text>acetate + ATP = acetyl phosphate + ADP</text>
        <dbReference type="Rhea" id="RHEA:11352"/>
        <dbReference type="ChEBI" id="CHEBI:22191"/>
        <dbReference type="ChEBI" id="CHEBI:30089"/>
        <dbReference type="ChEBI" id="CHEBI:30616"/>
        <dbReference type="ChEBI" id="CHEBI:456216"/>
        <dbReference type="EC" id="2.7.2.1"/>
    </reaction>
</comment>
<comment type="cofactor">
    <cofactor evidence="1">
        <name>Mg(2+)</name>
        <dbReference type="ChEBI" id="CHEBI:18420"/>
    </cofactor>
    <cofactor evidence="1">
        <name>Mn(2+)</name>
        <dbReference type="ChEBI" id="CHEBI:29035"/>
    </cofactor>
    <text evidence="1">Mg(2+). Can also accept Mn(2+).</text>
</comment>
<comment type="pathway">
    <text evidence="1">Metabolic intermediate biosynthesis; acetyl-CoA biosynthesis; acetyl-CoA from acetate: step 1/2.</text>
</comment>
<comment type="subunit">
    <text evidence="1">Homodimer.</text>
</comment>
<comment type="subcellular location">
    <subcellularLocation>
        <location evidence="1">Cytoplasm</location>
    </subcellularLocation>
</comment>
<comment type="similarity">
    <text evidence="1">Belongs to the acetokinase family.</text>
</comment>
<accession>B7K4D0</accession>
<organism>
    <name type="scientific">Rippkaea orientalis (strain PCC 8801 / RF-1)</name>
    <name type="common">Cyanothece sp. (strain PCC 8801)</name>
    <dbReference type="NCBI Taxonomy" id="41431"/>
    <lineage>
        <taxon>Bacteria</taxon>
        <taxon>Bacillati</taxon>
        <taxon>Cyanobacteriota</taxon>
        <taxon>Cyanophyceae</taxon>
        <taxon>Oscillatoriophycideae</taxon>
        <taxon>Chroococcales</taxon>
        <taxon>Aphanothecaceae</taxon>
        <taxon>Rippkaea</taxon>
        <taxon>Rippkaea orientalis</taxon>
    </lineage>
</organism>
<feature type="chain" id="PRO_1000116388" description="Acetate kinase">
    <location>
        <begin position="1"/>
        <end position="404"/>
    </location>
</feature>
<feature type="active site" description="Proton donor/acceptor" evidence="1">
    <location>
        <position position="155"/>
    </location>
</feature>
<feature type="binding site" evidence="1">
    <location>
        <position position="7"/>
    </location>
    <ligand>
        <name>Mg(2+)</name>
        <dbReference type="ChEBI" id="CHEBI:18420"/>
    </ligand>
</feature>
<feature type="binding site" evidence="1">
    <location>
        <position position="14"/>
    </location>
    <ligand>
        <name>ATP</name>
        <dbReference type="ChEBI" id="CHEBI:30616"/>
    </ligand>
</feature>
<feature type="binding site" evidence="1">
    <location>
        <position position="98"/>
    </location>
    <ligand>
        <name>substrate</name>
    </ligand>
</feature>
<feature type="binding site" evidence="1">
    <location>
        <begin position="214"/>
        <end position="218"/>
    </location>
    <ligand>
        <name>ATP</name>
        <dbReference type="ChEBI" id="CHEBI:30616"/>
    </ligand>
</feature>
<feature type="binding site" evidence="1">
    <location>
        <begin position="289"/>
        <end position="291"/>
    </location>
    <ligand>
        <name>ATP</name>
        <dbReference type="ChEBI" id="CHEBI:30616"/>
    </ligand>
</feature>
<feature type="binding site" evidence="1">
    <location>
        <begin position="337"/>
        <end position="341"/>
    </location>
    <ligand>
        <name>ATP</name>
        <dbReference type="ChEBI" id="CHEBI:30616"/>
    </ligand>
</feature>
<feature type="binding site" evidence="1">
    <location>
        <position position="390"/>
    </location>
    <ligand>
        <name>Mg(2+)</name>
        <dbReference type="ChEBI" id="CHEBI:18420"/>
    </ligand>
</feature>
<feature type="site" description="Transition state stabilizer" evidence="1">
    <location>
        <position position="186"/>
    </location>
</feature>
<feature type="site" description="Transition state stabilizer" evidence="1">
    <location>
        <position position="247"/>
    </location>
</feature>
<reference key="1">
    <citation type="journal article" date="2011" name="MBio">
        <title>Novel metabolic attributes of the genus Cyanothece, comprising a group of unicellular nitrogen-fixing Cyanobacteria.</title>
        <authorList>
            <person name="Bandyopadhyay A."/>
            <person name="Elvitigala T."/>
            <person name="Welsh E."/>
            <person name="Stockel J."/>
            <person name="Liberton M."/>
            <person name="Min H."/>
            <person name="Sherman L.A."/>
            <person name="Pakrasi H.B."/>
        </authorList>
    </citation>
    <scope>NUCLEOTIDE SEQUENCE [LARGE SCALE GENOMIC DNA]</scope>
    <source>
        <strain>PCC 8801 / RF-1</strain>
    </source>
</reference>
<dbReference type="EC" id="2.7.2.1" evidence="1"/>
<dbReference type="EMBL" id="CP001287">
    <property type="protein sequence ID" value="ACK67836.1"/>
    <property type="molecule type" value="Genomic_DNA"/>
</dbReference>
<dbReference type="RefSeq" id="WP_012597093.1">
    <property type="nucleotide sequence ID" value="NC_011726.1"/>
</dbReference>
<dbReference type="SMR" id="B7K4D0"/>
<dbReference type="STRING" id="41431.PCC8801_3887"/>
<dbReference type="KEGG" id="cyp:PCC8801_3887"/>
<dbReference type="eggNOG" id="COG0282">
    <property type="taxonomic scope" value="Bacteria"/>
</dbReference>
<dbReference type="HOGENOM" id="CLU_020352_0_1_3"/>
<dbReference type="OrthoDB" id="9802453at2"/>
<dbReference type="UniPathway" id="UPA00340">
    <property type="reaction ID" value="UER00458"/>
</dbReference>
<dbReference type="Proteomes" id="UP000008204">
    <property type="component" value="Chromosome"/>
</dbReference>
<dbReference type="GO" id="GO:0005737">
    <property type="term" value="C:cytoplasm"/>
    <property type="evidence" value="ECO:0007669"/>
    <property type="project" value="UniProtKB-SubCell"/>
</dbReference>
<dbReference type="GO" id="GO:0008776">
    <property type="term" value="F:acetate kinase activity"/>
    <property type="evidence" value="ECO:0007669"/>
    <property type="project" value="UniProtKB-UniRule"/>
</dbReference>
<dbReference type="GO" id="GO:0005524">
    <property type="term" value="F:ATP binding"/>
    <property type="evidence" value="ECO:0007669"/>
    <property type="project" value="UniProtKB-KW"/>
</dbReference>
<dbReference type="GO" id="GO:0000287">
    <property type="term" value="F:magnesium ion binding"/>
    <property type="evidence" value="ECO:0007669"/>
    <property type="project" value="UniProtKB-UniRule"/>
</dbReference>
<dbReference type="GO" id="GO:0006083">
    <property type="term" value="P:acetate metabolic process"/>
    <property type="evidence" value="ECO:0007669"/>
    <property type="project" value="TreeGrafter"/>
</dbReference>
<dbReference type="GO" id="GO:0006085">
    <property type="term" value="P:acetyl-CoA biosynthetic process"/>
    <property type="evidence" value="ECO:0007669"/>
    <property type="project" value="UniProtKB-UniRule"/>
</dbReference>
<dbReference type="CDD" id="cd24010">
    <property type="entry name" value="ASKHA_NBD_AcK_PK"/>
    <property type="match status" value="1"/>
</dbReference>
<dbReference type="Gene3D" id="3.30.420.40">
    <property type="match status" value="2"/>
</dbReference>
<dbReference type="HAMAP" id="MF_00020">
    <property type="entry name" value="Acetate_kinase"/>
    <property type="match status" value="1"/>
</dbReference>
<dbReference type="InterPro" id="IPR004372">
    <property type="entry name" value="Ac/propionate_kinase"/>
</dbReference>
<dbReference type="InterPro" id="IPR000890">
    <property type="entry name" value="Aliphatic_acid_kin_short-chain"/>
</dbReference>
<dbReference type="InterPro" id="IPR023865">
    <property type="entry name" value="Aliphatic_acid_kinase_CS"/>
</dbReference>
<dbReference type="InterPro" id="IPR043129">
    <property type="entry name" value="ATPase_NBD"/>
</dbReference>
<dbReference type="NCBIfam" id="TIGR00016">
    <property type="entry name" value="ackA"/>
    <property type="match status" value="1"/>
</dbReference>
<dbReference type="PANTHER" id="PTHR21060">
    <property type="entry name" value="ACETATE KINASE"/>
    <property type="match status" value="1"/>
</dbReference>
<dbReference type="PANTHER" id="PTHR21060:SF15">
    <property type="entry name" value="ACETATE KINASE-RELATED"/>
    <property type="match status" value="1"/>
</dbReference>
<dbReference type="Pfam" id="PF00871">
    <property type="entry name" value="Acetate_kinase"/>
    <property type="match status" value="1"/>
</dbReference>
<dbReference type="PIRSF" id="PIRSF000722">
    <property type="entry name" value="Acetate_prop_kin"/>
    <property type="match status" value="1"/>
</dbReference>
<dbReference type="PRINTS" id="PR00471">
    <property type="entry name" value="ACETATEKNASE"/>
</dbReference>
<dbReference type="SUPFAM" id="SSF53067">
    <property type="entry name" value="Actin-like ATPase domain"/>
    <property type="match status" value="2"/>
</dbReference>
<dbReference type="PROSITE" id="PS01075">
    <property type="entry name" value="ACETATE_KINASE_1"/>
    <property type="match status" value="1"/>
</dbReference>
<dbReference type="PROSITE" id="PS01076">
    <property type="entry name" value="ACETATE_KINASE_2"/>
    <property type="match status" value="1"/>
</dbReference>